<feature type="chain" id="PRO_0000104908" description="DNA-binding protein HU">
    <location>
        <begin position="1"/>
        <end position="90"/>
    </location>
</feature>
<feature type="region of interest" description="Disordered" evidence="2">
    <location>
        <begin position="56"/>
        <end position="90"/>
    </location>
</feature>
<feature type="modified residue" description="Phosphothreonine" evidence="1">
    <location>
        <position position="4"/>
    </location>
</feature>
<protein>
    <recommendedName>
        <fullName>DNA-binding protein HU</fullName>
    </recommendedName>
    <alternativeName>
        <fullName>DNA-binding protein II</fullName>
    </alternativeName>
    <alternativeName>
        <fullName>HB</fullName>
    </alternativeName>
</protein>
<accession>P0A3H2</accession>
<accession>P02346</accession>
<accession>P08822</accession>
<name>DBH_BACCA</name>
<keyword id="KW-0226">DNA condensation</keyword>
<keyword id="KW-0238">DNA-binding</keyword>
<keyword id="KW-0597">Phosphoprotein</keyword>
<reference key="1">
    <citation type="journal article" date="1992" name="Gene">
        <title>The DNA-binding protein HU from mesophilic and thermophilic bacilli: gene cloning, overproduction and purification.</title>
        <authorList>
            <person name="Padas P.M."/>
            <person name="Wilson K.S."/>
            <person name="Vorgias C.E."/>
        </authorList>
    </citation>
    <scope>NUCLEOTIDE SEQUENCE [GENOMIC DNA]</scope>
</reference>
<proteinExistence type="inferred from homology"/>
<gene>
    <name type="primary">hup</name>
    <name type="synonym">hbs</name>
    <name type="synonym">hbsU</name>
</gene>
<comment type="function">
    <text>Histone-like DNA-binding protein which is capable of wrapping DNA to stabilize it, and thus to prevent its denaturation under extreme environmental conditions.</text>
</comment>
<comment type="subunit">
    <text>Homodimer.</text>
</comment>
<comment type="similarity">
    <text evidence="3">Belongs to the bacterial histone-like protein family.</text>
</comment>
<dbReference type="EMBL" id="M73501">
    <property type="protein sequence ID" value="AAA22533.1"/>
    <property type="molecule type" value="Genomic_DNA"/>
</dbReference>
<dbReference type="PIR" id="JC1206">
    <property type="entry name" value="JC1206"/>
</dbReference>
<dbReference type="BMRB" id="P0A3H2"/>
<dbReference type="SMR" id="P0A3H2"/>
<dbReference type="GO" id="GO:0005829">
    <property type="term" value="C:cytosol"/>
    <property type="evidence" value="ECO:0007669"/>
    <property type="project" value="TreeGrafter"/>
</dbReference>
<dbReference type="GO" id="GO:0003677">
    <property type="term" value="F:DNA binding"/>
    <property type="evidence" value="ECO:0007669"/>
    <property type="project" value="UniProtKB-KW"/>
</dbReference>
<dbReference type="GO" id="GO:0030527">
    <property type="term" value="F:structural constituent of chromatin"/>
    <property type="evidence" value="ECO:0007669"/>
    <property type="project" value="InterPro"/>
</dbReference>
<dbReference type="GO" id="GO:0030261">
    <property type="term" value="P:chromosome condensation"/>
    <property type="evidence" value="ECO:0007669"/>
    <property type="project" value="UniProtKB-KW"/>
</dbReference>
<dbReference type="CDD" id="cd13831">
    <property type="entry name" value="HU"/>
    <property type="match status" value="1"/>
</dbReference>
<dbReference type="FunFam" id="4.10.520.10:FF:000001">
    <property type="entry name" value="DNA-binding protein HU"/>
    <property type="match status" value="1"/>
</dbReference>
<dbReference type="Gene3D" id="4.10.520.10">
    <property type="entry name" value="IHF-like DNA-binding proteins"/>
    <property type="match status" value="1"/>
</dbReference>
<dbReference type="InterPro" id="IPR000119">
    <property type="entry name" value="Hist_DNA-bd"/>
</dbReference>
<dbReference type="InterPro" id="IPR020816">
    <property type="entry name" value="Histone-like_DNA-bd_CS"/>
</dbReference>
<dbReference type="InterPro" id="IPR010992">
    <property type="entry name" value="IHF-like_DNA-bd_dom_sf"/>
</dbReference>
<dbReference type="PANTHER" id="PTHR33175">
    <property type="entry name" value="DNA-BINDING PROTEIN HU"/>
    <property type="match status" value="1"/>
</dbReference>
<dbReference type="PANTHER" id="PTHR33175:SF3">
    <property type="entry name" value="DNA-BINDING PROTEIN HU-BETA"/>
    <property type="match status" value="1"/>
</dbReference>
<dbReference type="Pfam" id="PF00216">
    <property type="entry name" value="Bac_DNA_binding"/>
    <property type="match status" value="1"/>
</dbReference>
<dbReference type="PRINTS" id="PR01727">
    <property type="entry name" value="DNABINDINGHU"/>
</dbReference>
<dbReference type="SMART" id="SM00411">
    <property type="entry name" value="BHL"/>
    <property type="match status" value="1"/>
</dbReference>
<dbReference type="SUPFAM" id="SSF47729">
    <property type="entry name" value="IHF-like DNA-binding proteins"/>
    <property type="match status" value="1"/>
</dbReference>
<dbReference type="PROSITE" id="PS00045">
    <property type="entry name" value="HISTONE_LIKE"/>
    <property type="match status" value="1"/>
</dbReference>
<evidence type="ECO:0000250" key="1"/>
<evidence type="ECO:0000256" key="2">
    <source>
        <dbReference type="SAM" id="MobiDB-lite"/>
    </source>
</evidence>
<evidence type="ECO:0000305" key="3"/>
<sequence length="90" mass="9716">MNKTELINAVAETSGLSKKDATKAVDAVFDSITEALRKGDKVQLIGFGNFEVRERAARKGRNPQTGEEMEIPASKVPAFKPGKALKDAVK</sequence>
<organism>
    <name type="scientific">Bacillus caldotenax</name>
    <dbReference type="NCBI Taxonomy" id="1395"/>
    <lineage>
        <taxon>Bacteria</taxon>
        <taxon>Bacillati</taxon>
        <taxon>Bacillota</taxon>
        <taxon>Bacilli</taxon>
        <taxon>Bacillales</taxon>
        <taxon>Anoxybacillaceae</taxon>
        <taxon>Geobacillus</taxon>
        <taxon>Geobacillus thermoleovorans group</taxon>
    </lineage>
</organism>